<protein>
    <recommendedName>
        <fullName evidence="1">Na(+)-translocating NADH-quinone reductase subunit E</fullName>
        <shortName evidence="1">Na(+)-NQR subunit E</shortName>
        <shortName evidence="1">Na(+)-translocating NQR subunit E</shortName>
        <ecNumber evidence="1">7.2.1.1</ecNumber>
    </recommendedName>
    <alternativeName>
        <fullName evidence="1">NQR complex subunit E</fullName>
    </alternativeName>
    <alternativeName>
        <fullName evidence="1">NQR-1 subunit E</fullName>
    </alternativeName>
</protein>
<accession>A6V3A1</accession>
<evidence type="ECO:0000255" key="1">
    <source>
        <dbReference type="HAMAP-Rule" id="MF_00429"/>
    </source>
</evidence>
<sequence length="202" mass="21695">MEHYISLFVKAVFVENMALAFFLGMCTFIAISKKVETAIGLGIAVIVVQTITVPANNLIYTYLLKDGALAWAGLPEVDLSFLGLLSYIGVIAAIVQILEMLLDKYVPSLYNALGVFLPLITVNCAIMAGSLFMVERDYNLAESTVYGVGSGFSWALAIAALAGIREKLKYSDVPEGLQGLGITFITIGLMSLGFMSFSGVQL</sequence>
<feature type="chain" id="PRO_1000060207" description="Na(+)-translocating NADH-quinone reductase subunit E">
    <location>
        <begin position="1"/>
        <end position="202"/>
    </location>
</feature>
<feature type="transmembrane region" description="Helical" evidence="1">
    <location>
        <begin position="11"/>
        <end position="31"/>
    </location>
</feature>
<feature type="transmembrane region" description="Helical" evidence="1">
    <location>
        <begin position="35"/>
        <end position="55"/>
    </location>
</feature>
<feature type="transmembrane region" description="Helical" evidence="1">
    <location>
        <begin position="81"/>
        <end position="101"/>
    </location>
</feature>
<feature type="transmembrane region" description="Helical" evidence="1">
    <location>
        <begin position="114"/>
        <end position="134"/>
    </location>
</feature>
<feature type="transmembrane region" description="Helical" evidence="1">
    <location>
        <begin position="144"/>
        <end position="164"/>
    </location>
</feature>
<feature type="transmembrane region" description="Helical" evidence="1">
    <location>
        <begin position="180"/>
        <end position="200"/>
    </location>
</feature>
<comment type="function">
    <text evidence="1">NQR complex catalyzes the reduction of ubiquinone-1 to ubiquinol by two successive reactions, coupled with the transport of Na(+) ions from the cytoplasm to the periplasm. NqrA to NqrE are probably involved in the second step, the conversion of ubisemiquinone to ubiquinol.</text>
</comment>
<comment type="catalytic activity">
    <reaction evidence="1">
        <text>a ubiquinone + n Na(+)(in) + NADH + H(+) = a ubiquinol + n Na(+)(out) + NAD(+)</text>
        <dbReference type="Rhea" id="RHEA:47748"/>
        <dbReference type="Rhea" id="RHEA-COMP:9565"/>
        <dbReference type="Rhea" id="RHEA-COMP:9566"/>
        <dbReference type="ChEBI" id="CHEBI:15378"/>
        <dbReference type="ChEBI" id="CHEBI:16389"/>
        <dbReference type="ChEBI" id="CHEBI:17976"/>
        <dbReference type="ChEBI" id="CHEBI:29101"/>
        <dbReference type="ChEBI" id="CHEBI:57540"/>
        <dbReference type="ChEBI" id="CHEBI:57945"/>
        <dbReference type="EC" id="7.2.1.1"/>
    </reaction>
</comment>
<comment type="subunit">
    <text evidence="1">Composed of six subunits; NqrA, NqrB, NqrC, NqrD, NqrE and NqrF.</text>
</comment>
<comment type="subcellular location">
    <subcellularLocation>
        <location evidence="1">Cell inner membrane</location>
        <topology evidence="1">Multi-pass membrane protein</topology>
    </subcellularLocation>
</comment>
<comment type="similarity">
    <text evidence="1">Belongs to the NqrDE/RnfAE family.</text>
</comment>
<name>NQRE_PSEP7</name>
<proteinExistence type="inferred from homology"/>
<keyword id="KW-0997">Cell inner membrane</keyword>
<keyword id="KW-1003">Cell membrane</keyword>
<keyword id="KW-0406">Ion transport</keyword>
<keyword id="KW-0472">Membrane</keyword>
<keyword id="KW-0520">NAD</keyword>
<keyword id="KW-0915">Sodium</keyword>
<keyword id="KW-0739">Sodium transport</keyword>
<keyword id="KW-1278">Translocase</keyword>
<keyword id="KW-0812">Transmembrane</keyword>
<keyword id="KW-1133">Transmembrane helix</keyword>
<keyword id="KW-0813">Transport</keyword>
<keyword id="KW-0830">Ubiquinone</keyword>
<reference key="1">
    <citation type="submission" date="2007-06" db="EMBL/GenBank/DDBJ databases">
        <authorList>
            <person name="Dodson R.J."/>
            <person name="Harkins D."/>
            <person name="Paulsen I.T."/>
        </authorList>
    </citation>
    <scope>NUCLEOTIDE SEQUENCE [LARGE SCALE GENOMIC DNA]</scope>
    <source>
        <strain>DSM 24068 / PA7</strain>
    </source>
</reference>
<organism>
    <name type="scientific">Pseudomonas paraeruginosa (strain DSM 24068 / PA7)</name>
    <name type="common">Pseudomonas aeruginosa (strain PA7)</name>
    <dbReference type="NCBI Taxonomy" id="381754"/>
    <lineage>
        <taxon>Bacteria</taxon>
        <taxon>Pseudomonadati</taxon>
        <taxon>Pseudomonadota</taxon>
        <taxon>Gammaproteobacteria</taxon>
        <taxon>Pseudomonadales</taxon>
        <taxon>Pseudomonadaceae</taxon>
        <taxon>Pseudomonas</taxon>
        <taxon>Pseudomonas paraeruginosa</taxon>
    </lineage>
</organism>
<gene>
    <name evidence="1" type="primary">nqrE</name>
    <name type="ordered locus">PSPA7_2164</name>
</gene>
<dbReference type="EC" id="7.2.1.1" evidence="1"/>
<dbReference type="EMBL" id="CP000744">
    <property type="protein sequence ID" value="ABR81757.1"/>
    <property type="molecule type" value="Genomic_DNA"/>
</dbReference>
<dbReference type="RefSeq" id="WP_003091182.1">
    <property type="nucleotide sequence ID" value="NC_009656.1"/>
</dbReference>
<dbReference type="SMR" id="A6V3A1"/>
<dbReference type="GeneID" id="77220513"/>
<dbReference type="KEGG" id="pap:PSPA7_2164"/>
<dbReference type="HOGENOM" id="CLU_095255_0_0_6"/>
<dbReference type="Proteomes" id="UP000001582">
    <property type="component" value="Chromosome"/>
</dbReference>
<dbReference type="GO" id="GO:0009276">
    <property type="term" value="C:Gram-negative-bacterium-type cell wall"/>
    <property type="evidence" value="ECO:0007669"/>
    <property type="project" value="InterPro"/>
</dbReference>
<dbReference type="GO" id="GO:0005886">
    <property type="term" value="C:plasma membrane"/>
    <property type="evidence" value="ECO:0007669"/>
    <property type="project" value="UniProtKB-SubCell"/>
</dbReference>
<dbReference type="GO" id="GO:0016655">
    <property type="term" value="F:oxidoreductase activity, acting on NAD(P)H, quinone or similar compound as acceptor"/>
    <property type="evidence" value="ECO:0007669"/>
    <property type="project" value="UniProtKB-UniRule"/>
</dbReference>
<dbReference type="GO" id="GO:0022904">
    <property type="term" value="P:respiratory electron transport chain"/>
    <property type="evidence" value="ECO:0007669"/>
    <property type="project" value="InterPro"/>
</dbReference>
<dbReference type="GO" id="GO:0006814">
    <property type="term" value="P:sodium ion transport"/>
    <property type="evidence" value="ECO:0007669"/>
    <property type="project" value="UniProtKB-UniRule"/>
</dbReference>
<dbReference type="HAMAP" id="MF_00429">
    <property type="entry name" value="NqrE"/>
    <property type="match status" value="1"/>
</dbReference>
<dbReference type="InterPro" id="IPR003667">
    <property type="entry name" value="NqrDE/RnfAE"/>
</dbReference>
<dbReference type="InterPro" id="IPR050133">
    <property type="entry name" value="NqrDE/RnfAE_oxidrdctase"/>
</dbReference>
<dbReference type="InterPro" id="IPR010967">
    <property type="entry name" value="NqrE"/>
</dbReference>
<dbReference type="NCBIfam" id="TIGR01940">
    <property type="entry name" value="nqrE"/>
    <property type="match status" value="1"/>
</dbReference>
<dbReference type="PANTHER" id="PTHR30335">
    <property type="entry name" value="INTEGRAL MEMBRANE PROTEIN OF SOXR-REDUCING COMPLEX"/>
    <property type="match status" value="1"/>
</dbReference>
<dbReference type="PANTHER" id="PTHR30335:SF1">
    <property type="entry name" value="NA(+)-TRANSLOCATING NADH-QUINONE REDUCTASE SUBUNIT E"/>
    <property type="match status" value="1"/>
</dbReference>
<dbReference type="Pfam" id="PF02508">
    <property type="entry name" value="Rnf-Nqr"/>
    <property type="match status" value="1"/>
</dbReference>
<dbReference type="PIRSF" id="PIRSF006102">
    <property type="entry name" value="NQR_DE"/>
    <property type="match status" value="1"/>
</dbReference>